<gene>
    <name evidence="1" type="primary">egsA</name>
    <name type="ordered locus">PYRAB06890</name>
    <name type="ORF">PAB1907</name>
</gene>
<keyword id="KW-0963">Cytoplasm</keyword>
<keyword id="KW-0444">Lipid biosynthesis</keyword>
<keyword id="KW-0443">Lipid metabolism</keyword>
<keyword id="KW-0479">Metal-binding</keyword>
<keyword id="KW-0520">NAD</keyword>
<keyword id="KW-0521">NADP</keyword>
<keyword id="KW-0560">Oxidoreductase</keyword>
<keyword id="KW-0594">Phospholipid biosynthesis</keyword>
<keyword id="KW-1208">Phospholipid metabolism</keyword>
<keyword id="KW-0862">Zinc</keyword>
<accession>Q9V0V0</accession>
<accession>G8ZJF3</accession>
<reference key="1">
    <citation type="journal article" date="2003" name="Mol. Microbiol.">
        <title>An integrated analysis of the genome of the hyperthermophilic archaeon Pyrococcus abyssi.</title>
        <authorList>
            <person name="Cohen G.N."/>
            <person name="Barbe V."/>
            <person name="Flament D."/>
            <person name="Galperin M."/>
            <person name="Heilig R."/>
            <person name="Lecompte O."/>
            <person name="Poch O."/>
            <person name="Prieur D."/>
            <person name="Querellou J."/>
            <person name="Ripp R."/>
            <person name="Thierry J.-C."/>
            <person name="Van der Oost J."/>
            <person name="Weissenbach J."/>
            <person name="Zivanovic Y."/>
            <person name="Forterre P."/>
        </authorList>
    </citation>
    <scope>NUCLEOTIDE SEQUENCE [LARGE SCALE GENOMIC DNA]</scope>
    <source>
        <strain>GE5 / Orsay</strain>
    </source>
</reference>
<reference key="2">
    <citation type="journal article" date="2012" name="Curr. Microbiol.">
        <title>Re-annotation of two hyperthermophilic archaea Pyrococcus abyssi GE5 and Pyrococcus furiosus DSM 3638.</title>
        <authorList>
            <person name="Gao J."/>
            <person name="Wang J."/>
        </authorList>
    </citation>
    <scope>GENOME REANNOTATION</scope>
    <source>
        <strain>GE5 / Orsay</strain>
    </source>
</reference>
<sequence>MHLMEFPREVILGKNLVPEVNNVIKRLKLESPGLVVYGPVTKKIAGESVKKAIRDEFDVYSITVKKAHIGEVEKVEAKIRDYNIKWAIAVGGGSIIDVTKLASYRSGIPFISFPTTASHDGIASANASIRGIEAKTSIKARPPIAVIADIEVIKTAPRRYLAAGVGDVISNITAVRDWKLAHKLKGEYFSEYAAALSLMSAKMVIRDAEIIRLGNDEGVRKVIKALISSGVAMSIAGSSRPASGAEHLFSHALDLLLDKPALHGEQTGIGTIIMAYLHGINWRKIKETLKTVGAPTSAYELGIDPEIIIEALTIAHKIRPERYTILGKEGLTREAAEKAAKITGVI</sequence>
<comment type="function">
    <text evidence="1">Catalyzes the NAD(P)H-dependent reduction of dihydroxyacetonephosphate (DHAP or glycerone phosphate) to glycerol 1-phosphate (G1P). The G1P thus generated is used as the glycerophosphate backbone of phospholipids in the cellular membranes of Archaea.</text>
</comment>
<comment type="catalytic activity">
    <reaction evidence="1">
        <text>sn-glycerol 1-phosphate + NAD(+) = dihydroxyacetone phosphate + NADH + H(+)</text>
        <dbReference type="Rhea" id="RHEA:21412"/>
        <dbReference type="ChEBI" id="CHEBI:15378"/>
        <dbReference type="ChEBI" id="CHEBI:57540"/>
        <dbReference type="ChEBI" id="CHEBI:57642"/>
        <dbReference type="ChEBI" id="CHEBI:57685"/>
        <dbReference type="ChEBI" id="CHEBI:57945"/>
        <dbReference type="EC" id="1.1.1.261"/>
    </reaction>
</comment>
<comment type="catalytic activity">
    <reaction evidence="1">
        <text>sn-glycerol 1-phosphate + NADP(+) = dihydroxyacetone phosphate + NADPH + H(+)</text>
        <dbReference type="Rhea" id="RHEA:21416"/>
        <dbReference type="ChEBI" id="CHEBI:15378"/>
        <dbReference type="ChEBI" id="CHEBI:57642"/>
        <dbReference type="ChEBI" id="CHEBI:57685"/>
        <dbReference type="ChEBI" id="CHEBI:57783"/>
        <dbReference type="ChEBI" id="CHEBI:58349"/>
        <dbReference type="EC" id="1.1.1.261"/>
    </reaction>
</comment>
<comment type="cofactor">
    <cofactor evidence="1">
        <name>Zn(2+)</name>
        <dbReference type="ChEBI" id="CHEBI:29105"/>
    </cofactor>
    <text evidence="1">Binds 1 zinc ion per subunit.</text>
</comment>
<comment type="pathway">
    <text evidence="1">Membrane lipid metabolism; glycerophospholipid metabolism.</text>
</comment>
<comment type="subcellular location">
    <subcellularLocation>
        <location evidence="1">Cytoplasm</location>
    </subcellularLocation>
</comment>
<comment type="similarity">
    <text evidence="1">Belongs to the glycerol-1-phosphate dehydrogenase family.</text>
</comment>
<proteinExistence type="inferred from homology"/>
<feature type="chain" id="PRO_0000157347" description="Glycerol-1-phosphate dehydrogenase [NAD(P)+]">
    <location>
        <begin position="1"/>
        <end position="346"/>
    </location>
</feature>
<feature type="binding site" evidence="1">
    <location>
        <begin position="93"/>
        <end position="97"/>
    </location>
    <ligand>
        <name>NAD(+)</name>
        <dbReference type="ChEBI" id="CHEBI:57540"/>
    </ligand>
</feature>
<feature type="binding site" evidence="1">
    <location>
        <begin position="115"/>
        <end position="118"/>
    </location>
    <ligand>
        <name>NAD(+)</name>
        <dbReference type="ChEBI" id="CHEBI:57540"/>
    </ligand>
</feature>
<feature type="binding site" evidence="1">
    <location>
        <position position="120"/>
    </location>
    <ligand>
        <name>substrate</name>
    </ligand>
</feature>
<feature type="binding site" evidence="1">
    <location>
        <position position="124"/>
    </location>
    <ligand>
        <name>NAD(+)</name>
        <dbReference type="ChEBI" id="CHEBI:57540"/>
    </ligand>
</feature>
<feature type="binding site" evidence="1">
    <location>
        <position position="167"/>
    </location>
    <ligand>
        <name>substrate</name>
    </ligand>
</feature>
<feature type="binding site" evidence="1">
    <location>
        <position position="167"/>
    </location>
    <ligand>
        <name>Zn(2+)</name>
        <dbReference type="ChEBI" id="CHEBI:29105"/>
        <note>catalytic</note>
    </ligand>
</feature>
<feature type="binding site" evidence="1">
    <location>
        <position position="247"/>
    </location>
    <ligand>
        <name>Zn(2+)</name>
        <dbReference type="ChEBI" id="CHEBI:29105"/>
        <note>catalytic</note>
    </ligand>
</feature>
<feature type="binding site" evidence="1">
    <location>
        <position position="251"/>
    </location>
    <ligand>
        <name>substrate</name>
    </ligand>
</feature>
<feature type="binding site" evidence="1">
    <location>
        <position position="263"/>
    </location>
    <ligand>
        <name>Zn(2+)</name>
        <dbReference type="ChEBI" id="CHEBI:29105"/>
        <note>catalytic</note>
    </ligand>
</feature>
<evidence type="ECO:0000255" key="1">
    <source>
        <dbReference type="HAMAP-Rule" id="MF_00497"/>
    </source>
</evidence>
<name>G1PDH_PYRAB</name>
<protein>
    <recommendedName>
        <fullName evidence="1">Glycerol-1-phosphate dehydrogenase [NAD(P)+]</fullName>
        <shortName evidence="1">G1P dehydrogenase</shortName>
        <shortName evidence="1">G1PDH</shortName>
        <ecNumber evidence="1">1.1.1.261</ecNumber>
    </recommendedName>
    <alternativeName>
        <fullName evidence="1">Enantiomeric glycerophosphate synthase</fullName>
    </alternativeName>
    <alternativeName>
        <fullName evidence="1">sn-glycerol-1-phosphate dehydrogenase</fullName>
    </alternativeName>
</protein>
<dbReference type="EC" id="1.1.1.261" evidence="1"/>
<dbReference type="EMBL" id="AJ248285">
    <property type="protein sequence ID" value="CAB49603.1"/>
    <property type="molecule type" value="Genomic_DNA"/>
</dbReference>
<dbReference type="EMBL" id="HE613800">
    <property type="protein sequence ID" value="CCE70080.1"/>
    <property type="molecule type" value="Genomic_DNA"/>
</dbReference>
<dbReference type="PIR" id="B75111">
    <property type="entry name" value="B75111"/>
</dbReference>
<dbReference type="RefSeq" id="WP_010867808.1">
    <property type="nucleotide sequence ID" value="NC_000868.1"/>
</dbReference>
<dbReference type="SMR" id="Q9V0V0"/>
<dbReference type="STRING" id="272844.PAB1907"/>
<dbReference type="KEGG" id="pab:PAB1907"/>
<dbReference type="PATRIC" id="fig|272844.11.peg.724"/>
<dbReference type="eggNOG" id="arCOG00982">
    <property type="taxonomic scope" value="Archaea"/>
</dbReference>
<dbReference type="HOGENOM" id="CLU_038362_0_0_2"/>
<dbReference type="OrthoDB" id="8656at2157"/>
<dbReference type="PhylomeDB" id="Q9V0V0"/>
<dbReference type="UniPathway" id="UPA00940"/>
<dbReference type="Proteomes" id="UP000000810">
    <property type="component" value="Chromosome"/>
</dbReference>
<dbReference type="Proteomes" id="UP000009139">
    <property type="component" value="Chromosome"/>
</dbReference>
<dbReference type="GO" id="GO:0005737">
    <property type="term" value="C:cytoplasm"/>
    <property type="evidence" value="ECO:0007669"/>
    <property type="project" value="UniProtKB-SubCell"/>
</dbReference>
<dbReference type="GO" id="GO:0106357">
    <property type="term" value="F:glycerol-1-phosphate dehydrogenase (NAD+) activity"/>
    <property type="evidence" value="ECO:0007669"/>
    <property type="project" value="RHEA"/>
</dbReference>
<dbReference type="GO" id="GO:0106358">
    <property type="term" value="F:glycerol-1-phosphate dehydrogenase (NADP+) activity"/>
    <property type="evidence" value="ECO:0007669"/>
    <property type="project" value="RHEA"/>
</dbReference>
<dbReference type="GO" id="GO:0046872">
    <property type="term" value="F:metal ion binding"/>
    <property type="evidence" value="ECO:0007669"/>
    <property type="project" value="UniProtKB-KW"/>
</dbReference>
<dbReference type="GO" id="GO:0006650">
    <property type="term" value="P:glycerophospholipid metabolic process"/>
    <property type="evidence" value="ECO:0007669"/>
    <property type="project" value="UniProtKB-UniRule"/>
</dbReference>
<dbReference type="GO" id="GO:0008654">
    <property type="term" value="P:phospholipid biosynthetic process"/>
    <property type="evidence" value="ECO:0007669"/>
    <property type="project" value="UniProtKB-KW"/>
</dbReference>
<dbReference type="CDD" id="cd08173">
    <property type="entry name" value="Gro1PDH"/>
    <property type="match status" value="1"/>
</dbReference>
<dbReference type="Gene3D" id="3.40.50.1970">
    <property type="match status" value="1"/>
</dbReference>
<dbReference type="Gene3D" id="1.20.1090.10">
    <property type="entry name" value="Dehydroquinate synthase-like - alpha domain"/>
    <property type="match status" value="1"/>
</dbReference>
<dbReference type="HAMAP" id="MF_00497_A">
    <property type="entry name" value="G1P_dehydrogenase_A"/>
    <property type="match status" value="1"/>
</dbReference>
<dbReference type="InterPro" id="IPR023002">
    <property type="entry name" value="G1P_dehydrogenase_arc"/>
</dbReference>
<dbReference type="InterPro" id="IPR032837">
    <property type="entry name" value="G1PDH"/>
</dbReference>
<dbReference type="InterPro" id="IPR016205">
    <property type="entry name" value="Glycerol_DH"/>
</dbReference>
<dbReference type="NCBIfam" id="NF002022">
    <property type="entry name" value="PRK00843.1"/>
    <property type="match status" value="1"/>
</dbReference>
<dbReference type="PANTHER" id="PTHR43616">
    <property type="entry name" value="GLYCEROL DEHYDROGENASE"/>
    <property type="match status" value="1"/>
</dbReference>
<dbReference type="PANTHER" id="PTHR43616:SF5">
    <property type="entry name" value="GLYCEROL DEHYDROGENASE 1"/>
    <property type="match status" value="1"/>
</dbReference>
<dbReference type="Pfam" id="PF13685">
    <property type="entry name" value="Fe-ADH_2"/>
    <property type="match status" value="1"/>
</dbReference>
<dbReference type="PIRSF" id="PIRSF000112">
    <property type="entry name" value="Glycerol_dehydrogenase"/>
    <property type="match status" value="1"/>
</dbReference>
<dbReference type="SUPFAM" id="SSF56796">
    <property type="entry name" value="Dehydroquinate synthase-like"/>
    <property type="match status" value="1"/>
</dbReference>
<organism>
    <name type="scientific">Pyrococcus abyssi (strain GE5 / Orsay)</name>
    <dbReference type="NCBI Taxonomy" id="272844"/>
    <lineage>
        <taxon>Archaea</taxon>
        <taxon>Methanobacteriati</taxon>
        <taxon>Methanobacteriota</taxon>
        <taxon>Thermococci</taxon>
        <taxon>Thermococcales</taxon>
        <taxon>Thermococcaceae</taxon>
        <taxon>Pyrococcus</taxon>
    </lineage>
</organism>